<reference key="1">
    <citation type="journal article" date="2009" name="J. Bacteriol.">
        <title>Genome sequence of Azotobacter vinelandii, an obligate aerobe specialized to support diverse anaerobic metabolic processes.</title>
        <authorList>
            <person name="Setubal J.C."/>
            <person name="Dos Santos P."/>
            <person name="Goldman B.S."/>
            <person name="Ertesvaag H."/>
            <person name="Espin G."/>
            <person name="Rubio L.M."/>
            <person name="Valla S."/>
            <person name="Almeida N.F."/>
            <person name="Balasubramanian D."/>
            <person name="Cromes L."/>
            <person name="Curatti L."/>
            <person name="Du Z."/>
            <person name="Godsy E."/>
            <person name="Goodner B."/>
            <person name="Hellner-Burris K."/>
            <person name="Hernandez J.A."/>
            <person name="Houmiel K."/>
            <person name="Imperial J."/>
            <person name="Kennedy C."/>
            <person name="Larson T.J."/>
            <person name="Latreille P."/>
            <person name="Ligon L.S."/>
            <person name="Lu J."/>
            <person name="Maerk M."/>
            <person name="Miller N.M."/>
            <person name="Norton S."/>
            <person name="O'Carroll I.P."/>
            <person name="Paulsen I."/>
            <person name="Raulfs E.C."/>
            <person name="Roemer R."/>
            <person name="Rosser J."/>
            <person name="Segura D."/>
            <person name="Slater S."/>
            <person name="Stricklin S.L."/>
            <person name="Studholme D.J."/>
            <person name="Sun J."/>
            <person name="Viana C.J."/>
            <person name="Wallin E."/>
            <person name="Wang B."/>
            <person name="Wheeler C."/>
            <person name="Zhu H."/>
            <person name="Dean D.R."/>
            <person name="Dixon R."/>
            <person name="Wood D."/>
        </authorList>
    </citation>
    <scope>NUCLEOTIDE SEQUENCE [LARGE SCALE GENOMIC DNA]</scope>
    <source>
        <strain>DJ / ATCC BAA-1303</strain>
    </source>
</reference>
<keyword id="KW-0004">4Fe-4S</keyword>
<keyword id="KW-0408">Iron</keyword>
<keyword id="KW-0411">Iron-sulfur</keyword>
<keyword id="KW-0479">Metal-binding</keyword>
<keyword id="KW-0560">Oxidoreductase</keyword>
<keyword id="KW-0884">PQQ biosynthesis</keyword>
<keyword id="KW-0949">S-adenosyl-L-methionine</keyword>
<sequence>MSAPGSSCTEPGPPLWLLAELTYRCPLQCPYCSNPLDFARHGAELSTAEWIEVFRQARELGAAQLGFSGGEPLVRQDLSELIGAARGLGYYTNLITSGIGLSEARIAEFATAGLDHIQVSFQAADAELNDLLAGSGKAFARKLAMARAVKAQGYPMVLNFVTHRHNIDAIERIIELCLELEADYIELATCQFYGWAELNRAGLLPTRAQLERAERITNQWREKLAAQGHPCKLIFVTPDYYEERPKACMGGWASLFLDIAPDGTALPCHNARMLPVQFPNVREHSLRHIWYDSFGFNRFRGDDWLPEPCRSCDEKGRDFGGCRCQAFLLTGDAEATDPVCAKSAHHGLILDARRQAEEAPLGLERLVHRNARTSEIICRSRSE</sequence>
<accession>C1DEW5</accession>
<proteinExistence type="inferred from homology"/>
<comment type="function">
    <text evidence="1">Catalyzes the cross-linking of a glutamate residue and a tyrosine residue in the PqqA protein as part of the biosynthesis of pyrroloquinoline quinone (PQQ).</text>
</comment>
<comment type="catalytic activity">
    <reaction evidence="1">
        <text>[PQQ precursor protein] + S-adenosyl-L-methionine = E-Y cross-linked-[PQQ precursor protein] + 5'-deoxyadenosine + L-methionine + H(+)</text>
        <dbReference type="Rhea" id="RHEA:56836"/>
        <dbReference type="Rhea" id="RHEA-COMP:14800"/>
        <dbReference type="Rhea" id="RHEA-COMP:14801"/>
        <dbReference type="ChEBI" id="CHEBI:15378"/>
        <dbReference type="ChEBI" id="CHEBI:17319"/>
        <dbReference type="ChEBI" id="CHEBI:57844"/>
        <dbReference type="ChEBI" id="CHEBI:59789"/>
        <dbReference type="ChEBI" id="CHEBI:141026"/>
        <dbReference type="ChEBI" id="CHEBI:141027"/>
        <dbReference type="EC" id="1.21.98.4"/>
    </reaction>
</comment>
<comment type="cofactor">
    <cofactor evidence="1">
        <name>[4Fe-4S] cluster</name>
        <dbReference type="ChEBI" id="CHEBI:49883"/>
    </cofactor>
    <text evidence="1">Binds 1 [4Fe-4S] cluster. The cluster is coordinated with 3 cysteines and an exchangeable S-adenosyl-L-methionine.</text>
</comment>
<comment type="pathway">
    <text evidence="1">Cofactor biosynthesis; pyrroloquinoline quinone biosynthesis.</text>
</comment>
<comment type="subunit">
    <text evidence="1">Interacts with PqqD. The interaction is necessary for activity of PqqE.</text>
</comment>
<comment type="similarity">
    <text evidence="1">Belongs to the radical SAM superfamily. PqqE family.</text>
</comment>
<name>PQQE_AZOVD</name>
<gene>
    <name evidence="1" type="primary">pqqE</name>
    <name type="ordered locus">Avin_41640</name>
</gene>
<feature type="chain" id="PRO_1000212474" description="PqqA peptide cyclase">
    <location>
        <begin position="1"/>
        <end position="383"/>
    </location>
</feature>
<feature type="domain" description="Radical SAM core" evidence="2">
    <location>
        <begin position="11"/>
        <end position="226"/>
    </location>
</feature>
<feature type="binding site" evidence="1">
    <location>
        <position position="25"/>
    </location>
    <ligand>
        <name>[4Fe-4S] cluster</name>
        <dbReference type="ChEBI" id="CHEBI:49883"/>
        <note>4Fe-4S-S-AdoMet</note>
    </ligand>
</feature>
<feature type="binding site" evidence="1">
    <location>
        <position position="29"/>
    </location>
    <ligand>
        <name>[4Fe-4S] cluster</name>
        <dbReference type="ChEBI" id="CHEBI:49883"/>
        <note>4Fe-4S-S-AdoMet</note>
    </ligand>
</feature>
<feature type="binding site" evidence="1">
    <location>
        <position position="32"/>
    </location>
    <ligand>
        <name>[4Fe-4S] cluster</name>
        <dbReference type="ChEBI" id="CHEBI:49883"/>
        <note>4Fe-4S-S-AdoMet</note>
    </ligand>
</feature>
<dbReference type="EC" id="1.21.98.4" evidence="1"/>
<dbReference type="EMBL" id="CP001157">
    <property type="protein sequence ID" value="ACO80294.1"/>
    <property type="molecule type" value="Genomic_DNA"/>
</dbReference>
<dbReference type="RefSeq" id="WP_012702666.1">
    <property type="nucleotide sequence ID" value="NC_012560.1"/>
</dbReference>
<dbReference type="SMR" id="C1DEW5"/>
<dbReference type="STRING" id="322710.Avin_41640"/>
<dbReference type="EnsemblBacteria" id="ACO80294">
    <property type="protein sequence ID" value="ACO80294"/>
    <property type="gene ID" value="Avin_41640"/>
</dbReference>
<dbReference type="GeneID" id="88187093"/>
<dbReference type="KEGG" id="avn:Avin_41640"/>
<dbReference type="eggNOG" id="COG0535">
    <property type="taxonomic scope" value="Bacteria"/>
</dbReference>
<dbReference type="HOGENOM" id="CLU_009273_4_7_6"/>
<dbReference type="OrthoDB" id="9792276at2"/>
<dbReference type="UniPathway" id="UPA00539"/>
<dbReference type="Proteomes" id="UP000002424">
    <property type="component" value="Chromosome"/>
</dbReference>
<dbReference type="GO" id="GO:0051539">
    <property type="term" value="F:4 iron, 4 sulfur cluster binding"/>
    <property type="evidence" value="ECO:0007669"/>
    <property type="project" value="UniProtKB-KW"/>
</dbReference>
<dbReference type="GO" id="GO:0009975">
    <property type="term" value="F:cyclase activity"/>
    <property type="evidence" value="ECO:0007669"/>
    <property type="project" value="UniProtKB-UniRule"/>
</dbReference>
<dbReference type="GO" id="GO:0005506">
    <property type="term" value="F:iron ion binding"/>
    <property type="evidence" value="ECO:0007669"/>
    <property type="project" value="UniProtKB-UniRule"/>
</dbReference>
<dbReference type="GO" id="GO:0016491">
    <property type="term" value="F:oxidoreductase activity"/>
    <property type="evidence" value="ECO:0007669"/>
    <property type="project" value="UniProtKB-KW"/>
</dbReference>
<dbReference type="GO" id="GO:1904047">
    <property type="term" value="F:S-adenosyl-L-methionine binding"/>
    <property type="evidence" value="ECO:0007669"/>
    <property type="project" value="UniProtKB-UniRule"/>
</dbReference>
<dbReference type="GO" id="GO:0018189">
    <property type="term" value="P:pyrroloquinoline quinone biosynthetic process"/>
    <property type="evidence" value="ECO:0007669"/>
    <property type="project" value="UniProtKB-UniRule"/>
</dbReference>
<dbReference type="CDD" id="cd01335">
    <property type="entry name" value="Radical_SAM"/>
    <property type="match status" value="1"/>
</dbReference>
<dbReference type="CDD" id="cd21119">
    <property type="entry name" value="SPASM_PqqE"/>
    <property type="match status" value="1"/>
</dbReference>
<dbReference type="Gene3D" id="3.20.20.70">
    <property type="entry name" value="Aldolase class I"/>
    <property type="match status" value="1"/>
</dbReference>
<dbReference type="HAMAP" id="MF_00660">
    <property type="entry name" value="PqqE"/>
    <property type="match status" value="1"/>
</dbReference>
<dbReference type="InterPro" id="IPR023885">
    <property type="entry name" value="4Fe4S-binding_SPASM_dom"/>
</dbReference>
<dbReference type="InterPro" id="IPR013785">
    <property type="entry name" value="Aldolase_TIM"/>
</dbReference>
<dbReference type="InterPro" id="IPR006638">
    <property type="entry name" value="Elp3/MiaA/NifB-like_rSAM"/>
</dbReference>
<dbReference type="InterPro" id="IPR000385">
    <property type="entry name" value="MoaA_NifB_PqqE_Fe-S-bd_CS"/>
</dbReference>
<dbReference type="InterPro" id="IPR011843">
    <property type="entry name" value="PQQ_synth_PqqE_bac"/>
</dbReference>
<dbReference type="InterPro" id="IPR017200">
    <property type="entry name" value="PqqE-like"/>
</dbReference>
<dbReference type="InterPro" id="IPR050377">
    <property type="entry name" value="Radical_SAM_PqqE_MftC-like"/>
</dbReference>
<dbReference type="InterPro" id="IPR007197">
    <property type="entry name" value="rSAM"/>
</dbReference>
<dbReference type="NCBIfam" id="TIGR02109">
    <property type="entry name" value="PQQ_syn_pqqE"/>
    <property type="match status" value="1"/>
</dbReference>
<dbReference type="NCBIfam" id="TIGR04085">
    <property type="entry name" value="rSAM_more_4Fe4S"/>
    <property type="match status" value="1"/>
</dbReference>
<dbReference type="PANTHER" id="PTHR11228:SF7">
    <property type="entry name" value="PQQA PEPTIDE CYCLASE"/>
    <property type="match status" value="1"/>
</dbReference>
<dbReference type="PANTHER" id="PTHR11228">
    <property type="entry name" value="RADICAL SAM DOMAIN PROTEIN"/>
    <property type="match status" value="1"/>
</dbReference>
<dbReference type="Pfam" id="PF04055">
    <property type="entry name" value="Radical_SAM"/>
    <property type="match status" value="1"/>
</dbReference>
<dbReference type="Pfam" id="PF13186">
    <property type="entry name" value="SPASM"/>
    <property type="match status" value="1"/>
</dbReference>
<dbReference type="PIRSF" id="PIRSF037420">
    <property type="entry name" value="PQQ_syn_pqqE"/>
    <property type="match status" value="1"/>
</dbReference>
<dbReference type="SFLD" id="SFLDF00280">
    <property type="entry name" value="coenzyme_PQQ_synthesis_protein"/>
    <property type="match status" value="1"/>
</dbReference>
<dbReference type="SFLD" id="SFLDG01386">
    <property type="entry name" value="main_SPASM_domain-containing"/>
    <property type="match status" value="1"/>
</dbReference>
<dbReference type="SMART" id="SM00729">
    <property type="entry name" value="Elp3"/>
    <property type="match status" value="1"/>
</dbReference>
<dbReference type="SUPFAM" id="SSF102114">
    <property type="entry name" value="Radical SAM enzymes"/>
    <property type="match status" value="1"/>
</dbReference>
<dbReference type="PROSITE" id="PS01305">
    <property type="entry name" value="MOAA_NIFB_PQQE"/>
    <property type="match status" value="1"/>
</dbReference>
<dbReference type="PROSITE" id="PS51918">
    <property type="entry name" value="RADICAL_SAM"/>
    <property type="match status" value="1"/>
</dbReference>
<evidence type="ECO:0000255" key="1">
    <source>
        <dbReference type="HAMAP-Rule" id="MF_00660"/>
    </source>
</evidence>
<evidence type="ECO:0000255" key="2">
    <source>
        <dbReference type="PROSITE-ProRule" id="PRU01266"/>
    </source>
</evidence>
<organism>
    <name type="scientific">Azotobacter vinelandii (strain DJ / ATCC BAA-1303)</name>
    <dbReference type="NCBI Taxonomy" id="322710"/>
    <lineage>
        <taxon>Bacteria</taxon>
        <taxon>Pseudomonadati</taxon>
        <taxon>Pseudomonadota</taxon>
        <taxon>Gammaproteobacteria</taxon>
        <taxon>Pseudomonadales</taxon>
        <taxon>Pseudomonadaceae</taxon>
        <taxon>Azotobacter</taxon>
    </lineage>
</organism>
<protein>
    <recommendedName>
        <fullName evidence="1">PqqA peptide cyclase</fullName>
        <ecNumber evidence="1">1.21.98.4</ecNumber>
    </recommendedName>
    <alternativeName>
        <fullName evidence="1">Coenzyme PQQ synthesis protein E</fullName>
    </alternativeName>
    <alternativeName>
        <fullName evidence="1">Pyrroloquinoline quinone biosynthesis protein E</fullName>
    </alternativeName>
</protein>